<dbReference type="EMBL" id="AC011437">
    <property type="protein sequence ID" value="AAF04897.1"/>
    <property type="molecule type" value="Genomic_DNA"/>
</dbReference>
<dbReference type="EMBL" id="CP002686">
    <property type="protein sequence ID" value="AEE74118.1"/>
    <property type="molecule type" value="Genomic_DNA"/>
</dbReference>
<dbReference type="EMBL" id="CP002686">
    <property type="protein sequence ID" value="AEE74119.1"/>
    <property type="molecule type" value="Genomic_DNA"/>
</dbReference>
<dbReference type="EMBL" id="CP002686">
    <property type="protein sequence ID" value="ANM65538.1"/>
    <property type="molecule type" value="Genomic_DNA"/>
</dbReference>
<dbReference type="EMBL" id="AY062866">
    <property type="protein sequence ID" value="AAL32944.1"/>
    <property type="molecule type" value="mRNA"/>
</dbReference>
<dbReference type="EMBL" id="AY128751">
    <property type="protein sequence ID" value="AAM91151.1"/>
    <property type="molecule type" value="mRNA"/>
</dbReference>
<dbReference type="RefSeq" id="NP_001319471.1">
    <property type="nucleotide sequence ID" value="NM_001337539.1"/>
</dbReference>
<dbReference type="RefSeq" id="NP_001327497.1">
    <property type="nucleotide sequence ID" value="NM_001337540.1"/>
</dbReference>
<dbReference type="RefSeq" id="NP_187119.1">
    <property type="nucleotide sequence ID" value="NM_111340.3"/>
</dbReference>
<dbReference type="SMR" id="Q9SR06"/>
<dbReference type="BioGRID" id="4961">
    <property type="interactions" value="9"/>
</dbReference>
<dbReference type="FunCoup" id="Q9SR06">
    <property type="interactions" value="4195"/>
</dbReference>
<dbReference type="IntAct" id="Q9SR06">
    <property type="interactions" value="4"/>
</dbReference>
<dbReference type="STRING" id="3702.Q9SR06"/>
<dbReference type="GlyGen" id="Q9SR06">
    <property type="glycosylation" value="1 site"/>
</dbReference>
<dbReference type="PaxDb" id="3702-AT3G04680.1"/>
<dbReference type="ProteomicsDB" id="246753"/>
<dbReference type="EnsemblPlants" id="AT3G04680.1">
    <property type="protein sequence ID" value="AT3G04680.1"/>
    <property type="gene ID" value="AT3G04680"/>
</dbReference>
<dbReference type="EnsemblPlants" id="AT3G04680.2">
    <property type="protein sequence ID" value="AT3G04680.2"/>
    <property type="gene ID" value="AT3G04680"/>
</dbReference>
<dbReference type="EnsemblPlants" id="AT3G04680.3">
    <property type="protein sequence ID" value="AT3G04680.3"/>
    <property type="gene ID" value="AT3G04680"/>
</dbReference>
<dbReference type="GeneID" id="819626"/>
<dbReference type="Gramene" id="AT3G04680.1">
    <property type="protein sequence ID" value="AT3G04680.1"/>
    <property type="gene ID" value="AT3G04680"/>
</dbReference>
<dbReference type="Gramene" id="AT3G04680.2">
    <property type="protein sequence ID" value="AT3G04680.2"/>
    <property type="gene ID" value="AT3G04680"/>
</dbReference>
<dbReference type="Gramene" id="AT3G04680.3">
    <property type="protein sequence ID" value="AT3G04680.3"/>
    <property type="gene ID" value="AT3G04680"/>
</dbReference>
<dbReference type="KEGG" id="ath:AT3G04680"/>
<dbReference type="Araport" id="AT3G04680"/>
<dbReference type="TAIR" id="AT3G04680">
    <property type="gene designation" value="CLPS3"/>
</dbReference>
<dbReference type="eggNOG" id="KOG2749">
    <property type="taxonomic scope" value="Eukaryota"/>
</dbReference>
<dbReference type="HOGENOM" id="CLU_018195_1_0_1"/>
<dbReference type="InParanoid" id="Q9SR06"/>
<dbReference type="OMA" id="VQYVNCH"/>
<dbReference type="OrthoDB" id="258143at2759"/>
<dbReference type="PhylomeDB" id="Q9SR06"/>
<dbReference type="PRO" id="PR:Q9SR06"/>
<dbReference type="Proteomes" id="UP000006548">
    <property type="component" value="Chromosome 3"/>
</dbReference>
<dbReference type="ExpressionAtlas" id="Q9SR06">
    <property type="expression patterns" value="baseline and differential"/>
</dbReference>
<dbReference type="GO" id="GO:0005849">
    <property type="term" value="C:mRNA cleavage factor complex"/>
    <property type="evidence" value="ECO:0000353"/>
    <property type="project" value="TAIR"/>
</dbReference>
<dbReference type="GO" id="GO:0005634">
    <property type="term" value="C:nucleus"/>
    <property type="evidence" value="ECO:0000314"/>
    <property type="project" value="TAIR"/>
</dbReference>
<dbReference type="GO" id="GO:0005524">
    <property type="term" value="F:ATP binding"/>
    <property type="evidence" value="ECO:0007669"/>
    <property type="project" value="UniProtKB-UniRule"/>
</dbReference>
<dbReference type="GO" id="GO:0051731">
    <property type="term" value="F:polynucleotide 5'-hydroxyl-kinase activity"/>
    <property type="evidence" value="ECO:0007669"/>
    <property type="project" value="InterPro"/>
</dbReference>
<dbReference type="GO" id="GO:0009908">
    <property type="term" value="P:flower development"/>
    <property type="evidence" value="ECO:0000315"/>
    <property type="project" value="TAIR"/>
</dbReference>
<dbReference type="GO" id="GO:0031124">
    <property type="term" value="P:mRNA 3'-end processing"/>
    <property type="evidence" value="ECO:0007669"/>
    <property type="project" value="UniProtKB-UniRule"/>
</dbReference>
<dbReference type="GO" id="GO:0006397">
    <property type="term" value="P:mRNA processing"/>
    <property type="evidence" value="ECO:0000315"/>
    <property type="project" value="TAIR"/>
</dbReference>
<dbReference type="GO" id="GO:0048827">
    <property type="term" value="P:phyllome development"/>
    <property type="evidence" value="ECO:0000315"/>
    <property type="project" value="TAIR"/>
</dbReference>
<dbReference type="GO" id="GO:0010228">
    <property type="term" value="P:vegetative to reproductive phase transition of meristem"/>
    <property type="evidence" value="ECO:0000315"/>
    <property type="project" value="TAIR"/>
</dbReference>
<dbReference type="FunFam" id="2.40.30.330:FF:000002">
    <property type="entry name" value="Protein CLP1 homolog"/>
    <property type="match status" value="1"/>
</dbReference>
<dbReference type="FunFam" id="3.40.50.300:FF:001231">
    <property type="entry name" value="Protein CLP1 homolog"/>
    <property type="match status" value="1"/>
</dbReference>
<dbReference type="FunFam" id="2.60.120.1030:FF:000001">
    <property type="entry name" value="Protein CLP1 homolog 5"/>
    <property type="match status" value="1"/>
</dbReference>
<dbReference type="Gene3D" id="2.60.120.1030">
    <property type="entry name" value="Clp1, DNA binding domain"/>
    <property type="match status" value="1"/>
</dbReference>
<dbReference type="Gene3D" id="3.40.50.300">
    <property type="entry name" value="P-loop containing nucleotide triphosphate hydrolases"/>
    <property type="match status" value="1"/>
</dbReference>
<dbReference type="Gene3D" id="2.40.30.330">
    <property type="entry name" value="Pre-mRNA cleavage complex subunit Clp1, C-terminal domain"/>
    <property type="match status" value="1"/>
</dbReference>
<dbReference type="HAMAP" id="MF_03035">
    <property type="entry name" value="Clp1"/>
    <property type="match status" value="1"/>
</dbReference>
<dbReference type="InterPro" id="IPR028606">
    <property type="entry name" value="Clp1"/>
</dbReference>
<dbReference type="InterPro" id="IPR045116">
    <property type="entry name" value="Clp1/Grc3"/>
</dbReference>
<dbReference type="InterPro" id="IPR010655">
    <property type="entry name" value="Clp1_C"/>
</dbReference>
<dbReference type="InterPro" id="IPR038238">
    <property type="entry name" value="Clp1_C_sf"/>
</dbReference>
<dbReference type="InterPro" id="IPR032324">
    <property type="entry name" value="Clp1_N"/>
</dbReference>
<dbReference type="InterPro" id="IPR038239">
    <property type="entry name" value="Clp1_N_sf"/>
</dbReference>
<dbReference type="InterPro" id="IPR032319">
    <property type="entry name" value="CLP1_P"/>
</dbReference>
<dbReference type="InterPro" id="IPR027417">
    <property type="entry name" value="P-loop_NTPase"/>
</dbReference>
<dbReference type="PANTHER" id="PTHR12755">
    <property type="entry name" value="CLEAVAGE/POLYADENYLATION FACTOR IA SUBUNIT CLP1P"/>
    <property type="match status" value="1"/>
</dbReference>
<dbReference type="PANTHER" id="PTHR12755:SF6">
    <property type="entry name" value="POLYRIBONUCLEOTIDE 5'-HYDROXYL-KINASE CLP1"/>
    <property type="match status" value="1"/>
</dbReference>
<dbReference type="Pfam" id="PF06807">
    <property type="entry name" value="Clp1"/>
    <property type="match status" value="1"/>
</dbReference>
<dbReference type="Pfam" id="PF16573">
    <property type="entry name" value="CLP1_N"/>
    <property type="match status" value="1"/>
</dbReference>
<dbReference type="Pfam" id="PF16575">
    <property type="entry name" value="CLP1_P"/>
    <property type="match status" value="1"/>
</dbReference>
<dbReference type="SUPFAM" id="SSF52540">
    <property type="entry name" value="P-loop containing nucleoside triphosphate hydrolases"/>
    <property type="match status" value="1"/>
</dbReference>
<reference key="1">
    <citation type="journal article" date="2000" name="Nature">
        <title>Sequence and analysis of chromosome 3 of the plant Arabidopsis thaliana.</title>
        <authorList>
            <person name="Salanoubat M."/>
            <person name="Lemcke K."/>
            <person name="Rieger M."/>
            <person name="Ansorge W."/>
            <person name="Unseld M."/>
            <person name="Fartmann B."/>
            <person name="Valle G."/>
            <person name="Bloecker H."/>
            <person name="Perez-Alonso M."/>
            <person name="Obermaier B."/>
            <person name="Delseny M."/>
            <person name="Boutry M."/>
            <person name="Grivell L.A."/>
            <person name="Mache R."/>
            <person name="Puigdomenech P."/>
            <person name="De Simone V."/>
            <person name="Choisne N."/>
            <person name="Artiguenave F."/>
            <person name="Robert C."/>
            <person name="Brottier P."/>
            <person name="Wincker P."/>
            <person name="Cattolico L."/>
            <person name="Weissenbach J."/>
            <person name="Saurin W."/>
            <person name="Quetier F."/>
            <person name="Schaefer M."/>
            <person name="Mueller-Auer S."/>
            <person name="Gabel C."/>
            <person name="Fuchs M."/>
            <person name="Benes V."/>
            <person name="Wurmbach E."/>
            <person name="Drzonek H."/>
            <person name="Erfle H."/>
            <person name="Jordan N."/>
            <person name="Bangert S."/>
            <person name="Wiedelmann R."/>
            <person name="Kranz H."/>
            <person name="Voss H."/>
            <person name="Holland R."/>
            <person name="Brandt P."/>
            <person name="Nyakatura G."/>
            <person name="Vezzi A."/>
            <person name="D'Angelo M."/>
            <person name="Pallavicini A."/>
            <person name="Toppo S."/>
            <person name="Simionati B."/>
            <person name="Conrad A."/>
            <person name="Hornischer K."/>
            <person name="Kauer G."/>
            <person name="Loehnert T.-H."/>
            <person name="Nordsiek G."/>
            <person name="Reichelt J."/>
            <person name="Scharfe M."/>
            <person name="Schoen O."/>
            <person name="Bargues M."/>
            <person name="Terol J."/>
            <person name="Climent J."/>
            <person name="Navarro P."/>
            <person name="Collado C."/>
            <person name="Perez-Perez A."/>
            <person name="Ottenwaelder B."/>
            <person name="Duchemin D."/>
            <person name="Cooke R."/>
            <person name="Laudie M."/>
            <person name="Berger-Llauro C."/>
            <person name="Purnelle B."/>
            <person name="Masuy D."/>
            <person name="de Haan M."/>
            <person name="Maarse A.C."/>
            <person name="Alcaraz J.-P."/>
            <person name="Cottet A."/>
            <person name="Casacuberta E."/>
            <person name="Monfort A."/>
            <person name="Argiriou A."/>
            <person name="Flores M."/>
            <person name="Liguori R."/>
            <person name="Vitale D."/>
            <person name="Mannhaupt G."/>
            <person name="Haase D."/>
            <person name="Schoof H."/>
            <person name="Rudd S."/>
            <person name="Zaccaria P."/>
            <person name="Mewes H.-W."/>
            <person name="Mayer K.F.X."/>
            <person name="Kaul S."/>
            <person name="Town C.D."/>
            <person name="Koo H.L."/>
            <person name="Tallon L.J."/>
            <person name="Jenkins J."/>
            <person name="Rooney T."/>
            <person name="Rizzo M."/>
            <person name="Walts A."/>
            <person name="Utterback T."/>
            <person name="Fujii C.Y."/>
            <person name="Shea T.P."/>
            <person name="Creasy T.H."/>
            <person name="Haas B."/>
            <person name="Maiti R."/>
            <person name="Wu D."/>
            <person name="Peterson J."/>
            <person name="Van Aken S."/>
            <person name="Pai G."/>
            <person name="Militscher J."/>
            <person name="Sellers P."/>
            <person name="Gill J.E."/>
            <person name="Feldblyum T.V."/>
            <person name="Preuss D."/>
            <person name="Lin X."/>
            <person name="Nierman W.C."/>
            <person name="Salzberg S.L."/>
            <person name="White O."/>
            <person name="Venter J.C."/>
            <person name="Fraser C.M."/>
            <person name="Kaneko T."/>
            <person name="Nakamura Y."/>
            <person name="Sato S."/>
            <person name="Kato T."/>
            <person name="Asamizu E."/>
            <person name="Sasamoto S."/>
            <person name="Kimura T."/>
            <person name="Idesawa K."/>
            <person name="Kawashima K."/>
            <person name="Kishida Y."/>
            <person name="Kiyokawa C."/>
            <person name="Kohara M."/>
            <person name="Matsumoto M."/>
            <person name="Matsuno A."/>
            <person name="Muraki A."/>
            <person name="Nakayama S."/>
            <person name="Nakazaki N."/>
            <person name="Shinpo S."/>
            <person name="Takeuchi C."/>
            <person name="Wada T."/>
            <person name="Watanabe A."/>
            <person name="Yamada M."/>
            <person name="Yasuda M."/>
            <person name="Tabata S."/>
        </authorList>
    </citation>
    <scope>NUCLEOTIDE SEQUENCE [LARGE SCALE GENOMIC DNA]</scope>
    <source>
        <strain>cv. Columbia</strain>
    </source>
</reference>
<reference key="2">
    <citation type="journal article" date="2017" name="Plant J.">
        <title>Araport11: a complete reannotation of the Arabidopsis thaliana reference genome.</title>
        <authorList>
            <person name="Cheng C.Y."/>
            <person name="Krishnakumar V."/>
            <person name="Chan A.P."/>
            <person name="Thibaud-Nissen F."/>
            <person name="Schobel S."/>
            <person name="Town C.D."/>
        </authorList>
    </citation>
    <scope>GENOME REANNOTATION</scope>
    <source>
        <strain>cv. Columbia</strain>
    </source>
</reference>
<reference key="3">
    <citation type="journal article" date="2003" name="Science">
        <title>Empirical analysis of transcriptional activity in the Arabidopsis genome.</title>
        <authorList>
            <person name="Yamada K."/>
            <person name="Lim J."/>
            <person name="Dale J.M."/>
            <person name="Chen H."/>
            <person name="Shinn P."/>
            <person name="Palm C.J."/>
            <person name="Southwick A.M."/>
            <person name="Wu H.C."/>
            <person name="Kim C.J."/>
            <person name="Nguyen M."/>
            <person name="Pham P.K."/>
            <person name="Cheuk R.F."/>
            <person name="Karlin-Newmann G."/>
            <person name="Liu S.X."/>
            <person name="Lam B."/>
            <person name="Sakano H."/>
            <person name="Wu T."/>
            <person name="Yu G."/>
            <person name="Miranda M."/>
            <person name="Quach H.L."/>
            <person name="Tripp M."/>
            <person name="Chang C.H."/>
            <person name="Lee J.M."/>
            <person name="Toriumi M.J."/>
            <person name="Chan M.M."/>
            <person name="Tang C.C."/>
            <person name="Onodera C.S."/>
            <person name="Deng J.M."/>
            <person name="Akiyama K."/>
            <person name="Ansari Y."/>
            <person name="Arakawa T."/>
            <person name="Banh J."/>
            <person name="Banno F."/>
            <person name="Bowser L."/>
            <person name="Brooks S.Y."/>
            <person name="Carninci P."/>
            <person name="Chao Q."/>
            <person name="Choy N."/>
            <person name="Enju A."/>
            <person name="Goldsmith A.D."/>
            <person name="Gurjal M."/>
            <person name="Hansen N.F."/>
            <person name="Hayashizaki Y."/>
            <person name="Johnson-Hopson C."/>
            <person name="Hsuan V.W."/>
            <person name="Iida K."/>
            <person name="Karnes M."/>
            <person name="Khan S."/>
            <person name="Koesema E."/>
            <person name="Ishida J."/>
            <person name="Jiang P.X."/>
            <person name="Jones T."/>
            <person name="Kawai J."/>
            <person name="Kamiya A."/>
            <person name="Meyers C."/>
            <person name="Nakajima M."/>
            <person name="Narusaka M."/>
            <person name="Seki M."/>
            <person name="Sakurai T."/>
            <person name="Satou M."/>
            <person name="Tamse R."/>
            <person name="Vaysberg M."/>
            <person name="Wallender E.K."/>
            <person name="Wong C."/>
            <person name="Yamamura Y."/>
            <person name="Yuan S."/>
            <person name="Shinozaki K."/>
            <person name="Davis R.W."/>
            <person name="Theologis A."/>
            <person name="Ecker J.R."/>
        </authorList>
    </citation>
    <scope>NUCLEOTIDE SEQUENCE [LARGE SCALE MRNA]</scope>
    <source>
        <strain>cv. Columbia</strain>
    </source>
</reference>
<reference key="4">
    <citation type="journal article" date="2008" name="BMC Genomics">
        <title>Arabidopsis mRNA polyadenylation machinery: comprehensive analysis of protein-protein interactions and gene expression profiling.</title>
        <authorList>
            <person name="Hunt A.G."/>
            <person name="Xu R."/>
            <person name="Addepalli B."/>
            <person name="Rao S."/>
            <person name="Forbes K.P."/>
            <person name="Meeks L.R."/>
            <person name="Xing D."/>
            <person name="Mo M."/>
            <person name="Zhao H."/>
            <person name="Bandyopadhyay A."/>
            <person name="Dampanaboina L."/>
            <person name="Marion A."/>
            <person name="Von Lanken C."/>
            <person name="Li Q.Q."/>
        </authorList>
    </citation>
    <scope>INTERACTION WITH CPSF30; PCFS1; PCFS5 AND PCFS4</scope>
    <scope>GENE FAMILY</scope>
    <scope>NOMENCLATURE</scope>
</reference>
<reference key="5">
    <citation type="journal article" date="2008" name="Plant J.">
        <title>Arabidopsis PCFS4, a homologue of yeast polyadenylation factor Pcf11p, regulates FCA alternative processing and promotes flowering time.</title>
        <authorList>
            <person name="Xing D."/>
            <person name="Zhao H."/>
            <person name="Xu R."/>
            <person name="Li Q.Q."/>
        </authorList>
    </citation>
    <scope>INTERACTION WITH PCFS4</scope>
    <scope>SUBCELLULAR LOCATION</scope>
</reference>
<reference key="6">
    <citation type="journal article" date="2008" name="Plant Physiol.">
        <title>Arabidopsis CLP1-SIMILAR PROTEIN3, an ortholog of human polyadenylation factor CLP1, functions in gametophyte, embryo, and postembryonic development.</title>
        <authorList>
            <person name="Xing D."/>
            <person name="Zhao H."/>
            <person name="Li Q.Q."/>
        </authorList>
    </citation>
    <scope>FUNCTION</scope>
    <scope>INTERACTION WITH CPSF100; CPSF160 AND FY</scope>
    <scope>SUBCELLULAR LOCATION</scope>
</reference>
<reference key="7">
    <citation type="journal article" date="2009" name="Plant Physiol.">
        <title>Unique features of plant cleavage and polyadenylation specificity factor revealed by proteomic studies.</title>
        <authorList>
            <person name="Zhao H."/>
            <person name="Xing D."/>
            <person name="Li Q.Q."/>
        </authorList>
    </citation>
    <scope>INTERACTION WITH PCFS4 AND SYM5</scope>
</reference>
<comment type="function">
    <text evidence="1 2 4">Required for endonucleolytic cleavage during polyadenylation-dependent pre-mRNA 3'-end formation (By similarity). Functions in gametophyte, embryo and postembryotic development (PubMed:18971429).</text>
</comment>
<comment type="subunit">
    <text evidence="2 3 4 5">Interacts with PCFS4 and SYM5. Forms a complex with cleavage and polyadenylation specificity factor (CPSF) subunits CPSF30, CPSF100, PCFS1, PCFS4, PCFS5, CPSF160 and FY.</text>
</comment>
<comment type="interaction">
    <interactant intactId="EBI-1775627">
        <id>Q9SR06</id>
    </interactant>
    <interactant intactId="EBI-1775648">
        <id>Q0WPF2</id>
        <label>PCFS4</label>
    </interactant>
    <organismsDiffer>false</organismsDiffer>
    <experiments>3</experiments>
</comment>
<comment type="subcellular location">
    <subcellularLocation>
        <location evidence="1 4">Nucleus</location>
    </subcellularLocation>
</comment>
<comment type="similarity">
    <text evidence="1">Belongs to the Clp1 family. Clp1 subfamily.</text>
</comment>
<feature type="chain" id="PRO_0000421923" description="Protein CLP1 homolog">
    <location>
        <begin position="1"/>
        <end position="444"/>
    </location>
</feature>
<feature type="binding site" evidence="1">
    <location>
        <position position="33"/>
    </location>
    <ligand>
        <name>ATP</name>
        <dbReference type="ChEBI" id="CHEBI:30616"/>
    </ligand>
</feature>
<feature type="binding site" evidence="1">
    <location>
        <position position="72"/>
    </location>
    <ligand>
        <name>ATP</name>
        <dbReference type="ChEBI" id="CHEBI:30616"/>
    </ligand>
</feature>
<feature type="binding site" evidence="1">
    <location>
        <begin position="140"/>
        <end position="145"/>
    </location>
    <ligand>
        <name>ATP</name>
        <dbReference type="ChEBI" id="CHEBI:30616"/>
    </ligand>
</feature>
<evidence type="ECO:0000255" key="1">
    <source>
        <dbReference type="HAMAP-Rule" id="MF_03035"/>
    </source>
</evidence>
<evidence type="ECO:0000269" key="2">
    <source>
    </source>
</evidence>
<evidence type="ECO:0000269" key="3">
    <source>
    </source>
</evidence>
<evidence type="ECO:0000269" key="4">
    <source>
    </source>
</evidence>
<evidence type="ECO:0000269" key="5">
    <source>
    </source>
</evidence>
<keyword id="KW-0067">ATP-binding</keyword>
<keyword id="KW-0507">mRNA processing</keyword>
<keyword id="KW-0547">Nucleotide-binding</keyword>
<keyword id="KW-0539">Nucleus</keyword>
<keyword id="KW-1185">Reference proteome</keyword>
<sequence>MAYGGPSMNPPALSGAVPGSANLKQVKLERESELRIEVSEEPLRLRVVNGTAEIFGSELPPEIWRTFPPRMKFAVFTWYGATIEMDGVTETDYTADETPMVSYINVHAILDARRRFAKASTSNDPESSQGPRVIVVGPTDSGKSTLTKMLLSWAAKQGWRPTFVDLDVGQGSITIPGSIAAAPIEMPLDPVEGFPLDMALVYYYGHASPNMNVELYKALVKELAQVLEKQFVGNPESRAAGMVINTMGWIEGIGYELLLHAIDTFNASVVLVLGQEKLFSRLKDVLRSKSNVDVVKLHKSGGVVARVKEVRKRSRNFKIQEYFYGLSKELSPYANTSSFSDLQVFRIGGGPQAPKSALPAGSTSVSNPLRVTPVNIDDRDLLHSVLAVSYAEEPDQIISSNVSGFVYVTEVNVQKKKITYLAPSPGTLPSKLLVAGSLAWLESV</sequence>
<name>CLP1_ARATH</name>
<proteinExistence type="evidence at protein level"/>
<gene>
    <name type="primary">CLPS3</name>
    <name type="ordered locus">At3g04680</name>
    <name type="ORF">F7O18.15</name>
</gene>
<accession>Q9SR06</accession>
<organism>
    <name type="scientific">Arabidopsis thaliana</name>
    <name type="common">Mouse-ear cress</name>
    <dbReference type="NCBI Taxonomy" id="3702"/>
    <lineage>
        <taxon>Eukaryota</taxon>
        <taxon>Viridiplantae</taxon>
        <taxon>Streptophyta</taxon>
        <taxon>Embryophyta</taxon>
        <taxon>Tracheophyta</taxon>
        <taxon>Spermatophyta</taxon>
        <taxon>Magnoliopsida</taxon>
        <taxon>eudicotyledons</taxon>
        <taxon>Gunneridae</taxon>
        <taxon>Pentapetalae</taxon>
        <taxon>rosids</taxon>
        <taxon>malvids</taxon>
        <taxon>Brassicales</taxon>
        <taxon>Brassicaceae</taxon>
        <taxon>Camelineae</taxon>
        <taxon>Arabidopsis</taxon>
    </lineage>
</organism>
<protein>
    <recommendedName>
        <fullName evidence="1">Protein CLP1 homolog</fullName>
    </recommendedName>
    <alternativeName>
        <fullName>CLP-like protein 3</fullName>
    </alternativeName>
    <alternativeName>
        <fullName>Protein CLP-SIMILAR PROTEIN 3</fullName>
    </alternativeName>
</protein>